<gene>
    <name type="primary">HSP70.1</name>
</gene>
<proteinExistence type="inferred from homology"/>
<comment type="subcellular location">
    <subcellularLocation>
        <location>Mitochondrion</location>
    </subcellularLocation>
</comment>
<comment type="similarity">
    <text evidence="3">Belongs to the heat shock protein 70 family.</text>
</comment>
<feature type="transit peptide" description="Mitochondrion" evidence="1">
    <location>
        <begin position="1"/>
        <end position="20"/>
    </location>
</feature>
<feature type="chain" id="PRO_0000013544" description="Heat shock 70-related protein 1, mitochondrial">
    <location>
        <begin position="21"/>
        <end position="634"/>
    </location>
</feature>
<feature type="coiled-coil region" evidence="2">
    <location>
        <begin position="538"/>
        <end position="614"/>
    </location>
</feature>
<sequence length="634" mass="68330">MFARRVCGSAAASAACLARHESQKVQGDVIGVDLGTTYSCVATMDGDKARVLENSEGFRTTPSVVAFKGSEKLVGLAAKRQAITNPQSTFYAVKRLIGRRFEDEHIQKDIKNVPYKIVRAGNGDAWVQDGNGKQYSPSQIGAFVLEKMKETAENFLGHKVSNAVVTCPAYFNDAQRQATKDAGTIAGLNVIRVVNEPTAAALAYGMDKTKDSLIAVYDLGGGTFDISVLEIAGGVFEVKATNGDTHLGGEDFDLALSDYILEEFRKTSGIDLSKERMALQRVREAAEKAKCELSSAMETEVNLPFITANADGAQHIQMRISRSKFEGITQRLIERSIAPCKQCMKDAGVELKEINDVVLVGGMTRIRSGGGGEEVLPEGPVRGVNPDEAVALGAATLGGVLRGKASDLILVDVTPLSLGTSVVGDVFVPIIPKNTTIPCMRSHIFTTVDDGQTAIKFKVFQGEREIASENQIRGEFDLSGIPPAPRGVPQVEVTFDIDANGICHVTAKDKATGKTQNITITANGGLSKEQIEQMIRDSEQHAEADRVKRELVEVRNNAETQLTTAERQLGEWKYVSDAEKENVKTLVAELRKAMENPNVAKDDLAAATDKLQKAVMECGRTEYQQAAAANSGQC</sequence>
<evidence type="ECO:0000250" key="1"/>
<evidence type="ECO:0000255" key="2"/>
<evidence type="ECO:0000305" key="3"/>
<organism>
    <name type="scientific">Leishmania major</name>
    <dbReference type="NCBI Taxonomy" id="5664"/>
    <lineage>
        <taxon>Eukaryota</taxon>
        <taxon>Discoba</taxon>
        <taxon>Euglenozoa</taxon>
        <taxon>Kinetoplastea</taxon>
        <taxon>Metakinetoplastina</taxon>
        <taxon>Trypanosomatida</taxon>
        <taxon>Trypanosomatidae</taxon>
        <taxon>Leishmaniinae</taxon>
        <taxon>Leishmania</taxon>
    </lineage>
</organism>
<dbReference type="EMBL" id="X64137">
    <property type="protein sequence ID" value="CAA45498.2"/>
    <property type="molecule type" value="Genomic_DNA"/>
</dbReference>
<dbReference type="EMBL" id="X14574">
    <property type="protein sequence ID" value="CAA32713.1"/>
    <property type="molecule type" value="Genomic_DNA"/>
</dbReference>
<dbReference type="PIR" id="S33575">
    <property type="entry name" value="S33575"/>
</dbReference>
<dbReference type="SMR" id="P12076"/>
<dbReference type="VEuPathDB" id="TriTrypDB:LmjF.30.2460"/>
<dbReference type="VEuPathDB" id="TriTrypDB:LMJFC_300035100"/>
<dbReference type="VEuPathDB" id="TriTrypDB:LMJLV39_300032000"/>
<dbReference type="VEuPathDB" id="TriTrypDB:LMJSD75_300031900"/>
<dbReference type="eggNOG" id="KOG0102">
    <property type="taxonomic scope" value="Eukaryota"/>
</dbReference>
<dbReference type="GO" id="GO:0005739">
    <property type="term" value="C:mitochondrion"/>
    <property type="evidence" value="ECO:0007669"/>
    <property type="project" value="UniProtKB-SubCell"/>
</dbReference>
<dbReference type="GO" id="GO:0005524">
    <property type="term" value="F:ATP binding"/>
    <property type="evidence" value="ECO:0007669"/>
    <property type="project" value="UniProtKB-KW"/>
</dbReference>
<dbReference type="GO" id="GO:0140662">
    <property type="term" value="F:ATP-dependent protein folding chaperone"/>
    <property type="evidence" value="ECO:0007669"/>
    <property type="project" value="InterPro"/>
</dbReference>
<dbReference type="GO" id="GO:0051082">
    <property type="term" value="F:unfolded protein binding"/>
    <property type="evidence" value="ECO:0007669"/>
    <property type="project" value="InterPro"/>
</dbReference>
<dbReference type="FunFam" id="2.60.34.10:FF:000014">
    <property type="entry name" value="Chaperone protein DnaK HSP70"/>
    <property type="match status" value="1"/>
</dbReference>
<dbReference type="FunFam" id="3.30.420.40:FF:000020">
    <property type="entry name" value="Chaperone protein HscA homolog"/>
    <property type="match status" value="1"/>
</dbReference>
<dbReference type="FunFam" id="1.20.1270.10:FF:000026">
    <property type="entry name" value="Heat shock 70-related protein 1, mitochondrial"/>
    <property type="match status" value="1"/>
</dbReference>
<dbReference type="FunFam" id="3.30.30.30:FF:000003">
    <property type="entry name" value="Heat shock protein 9"/>
    <property type="match status" value="1"/>
</dbReference>
<dbReference type="FunFam" id="3.30.420.40:FF:000004">
    <property type="entry name" value="Molecular chaperone DnaK"/>
    <property type="match status" value="1"/>
</dbReference>
<dbReference type="FunFam" id="3.90.640.10:FF:000003">
    <property type="entry name" value="Molecular chaperone DnaK"/>
    <property type="match status" value="1"/>
</dbReference>
<dbReference type="Gene3D" id="1.20.1270.10">
    <property type="match status" value="1"/>
</dbReference>
<dbReference type="Gene3D" id="3.30.30.30">
    <property type="match status" value="1"/>
</dbReference>
<dbReference type="Gene3D" id="3.30.420.40">
    <property type="match status" value="2"/>
</dbReference>
<dbReference type="Gene3D" id="3.90.640.10">
    <property type="entry name" value="Actin, Chain A, domain 4"/>
    <property type="match status" value="1"/>
</dbReference>
<dbReference type="Gene3D" id="2.60.34.10">
    <property type="entry name" value="Substrate Binding Domain Of DNAk, Chain A, domain 1"/>
    <property type="match status" value="1"/>
</dbReference>
<dbReference type="HAMAP" id="MF_00332">
    <property type="entry name" value="DnaK"/>
    <property type="match status" value="1"/>
</dbReference>
<dbReference type="InterPro" id="IPR043129">
    <property type="entry name" value="ATPase_NBD"/>
</dbReference>
<dbReference type="InterPro" id="IPR012725">
    <property type="entry name" value="Chaperone_DnaK"/>
</dbReference>
<dbReference type="InterPro" id="IPR018181">
    <property type="entry name" value="Heat_shock_70_CS"/>
</dbReference>
<dbReference type="InterPro" id="IPR029048">
    <property type="entry name" value="HSP70_C_sf"/>
</dbReference>
<dbReference type="InterPro" id="IPR029047">
    <property type="entry name" value="HSP70_peptide-bd_sf"/>
</dbReference>
<dbReference type="InterPro" id="IPR013126">
    <property type="entry name" value="Hsp_70_fam"/>
</dbReference>
<dbReference type="NCBIfam" id="NF001413">
    <property type="entry name" value="PRK00290.1"/>
    <property type="match status" value="1"/>
</dbReference>
<dbReference type="NCBIfam" id="TIGR02350">
    <property type="entry name" value="prok_dnaK"/>
    <property type="match status" value="1"/>
</dbReference>
<dbReference type="PANTHER" id="PTHR19375">
    <property type="entry name" value="HEAT SHOCK PROTEIN 70KDA"/>
    <property type="match status" value="1"/>
</dbReference>
<dbReference type="Pfam" id="PF00012">
    <property type="entry name" value="HSP70"/>
    <property type="match status" value="1"/>
</dbReference>
<dbReference type="PRINTS" id="PR00301">
    <property type="entry name" value="HEATSHOCK70"/>
</dbReference>
<dbReference type="SUPFAM" id="SSF53067">
    <property type="entry name" value="Actin-like ATPase domain"/>
    <property type="match status" value="2"/>
</dbReference>
<dbReference type="SUPFAM" id="SSF100920">
    <property type="entry name" value="Heat shock protein 70kD (HSP70), peptide-binding domain"/>
    <property type="match status" value="1"/>
</dbReference>
<dbReference type="PROSITE" id="PS00297">
    <property type="entry name" value="HSP70_1"/>
    <property type="match status" value="1"/>
</dbReference>
<dbReference type="PROSITE" id="PS00329">
    <property type="entry name" value="HSP70_2"/>
    <property type="match status" value="1"/>
</dbReference>
<accession>P12076</accession>
<keyword id="KW-0067">ATP-binding</keyword>
<keyword id="KW-0175">Coiled coil</keyword>
<keyword id="KW-0496">Mitochondrion</keyword>
<keyword id="KW-0547">Nucleotide-binding</keyword>
<keyword id="KW-0346">Stress response</keyword>
<keyword id="KW-0809">Transit peptide</keyword>
<name>HSP71_LEIMA</name>
<protein>
    <recommendedName>
        <fullName>Heat shock 70-related protein 1, mitochondrial</fullName>
    </recommendedName>
</protein>
<reference key="1">
    <citation type="journal article" date="1993" name="J. Cell Sci.">
        <title>Expression of a mitochondrial stress protein in the protozoan parasite Leishmania major.</title>
        <authorList>
            <person name="Searle S."/>
            <person name="McCrossan M.V."/>
            <person name="Smith D.F."/>
        </authorList>
    </citation>
    <scope>NUCLEOTIDE SEQUENCE [GENOMIC DNA]</scope>
    <source>
        <strain>MHOM/IL/81/Friedlin</strain>
    </source>
</reference>
<reference key="2">
    <citation type="submission" date="2004-07" db="EMBL/GenBank/DDBJ databases">
        <authorList>
            <person name="Smith D.F."/>
        </authorList>
    </citation>
    <scope>SEQUENCE REVISION TO 461-500</scope>
</reference>
<reference key="3">
    <citation type="journal article" date="1989" name="Nucleic Acids Res.">
        <title>A family of heat shock protein 70-related genes are expressed in the promastigotes of Leishmania major.</title>
        <authorList>
            <person name="Searle S."/>
            <person name="Campos A.J.R."/>
            <person name="Coulson R.M.R."/>
            <person name="Spithill T.W."/>
            <person name="Smith D.F."/>
        </authorList>
    </citation>
    <scope>NUCLEOTIDE SEQUENCE [GENOMIC DNA] OF 1-249</scope>
    <source>
        <strain>MHOM/IL/81/Friedlin</strain>
    </source>
</reference>